<feature type="chain" id="PRO_0000352916" description="Threonylcarbamoyl-AMP synthase">
    <location>
        <begin position="1"/>
        <end position="190"/>
    </location>
</feature>
<feature type="domain" description="YrdC-like" evidence="1">
    <location>
        <begin position="7"/>
        <end position="190"/>
    </location>
</feature>
<evidence type="ECO:0000255" key="1">
    <source>
        <dbReference type="HAMAP-Rule" id="MF_01852"/>
    </source>
</evidence>
<evidence type="ECO:0000305" key="2"/>
<accession>A7ZSH1</accession>
<proteinExistence type="inferred from homology"/>
<organism>
    <name type="scientific">Escherichia coli O139:H28 (strain E24377A / ETEC)</name>
    <dbReference type="NCBI Taxonomy" id="331111"/>
    <lineage>
        <taxon>Bacteria</taxon>
        <taxon>Pseudomonadati</taxon>
        <taxon>Pseudomonadota</taxon>
        <taxon>Gammaproteobacteria</taxon>
        <taxon>Enterobacterales</taxon>
        <taxon>Enterobacteriaceae</taxon>
        <taxon>Escherichia</taxon>
    </lineage>
</organism>
<gene>
    <name evidence="1" type="primary">tsaC</name>
    <name type="synonym">rimN</name>
    <name type="ordered locus">EcE24377A_3765</name>
</gene>
<keyword id="KW-0067">ATP-binding</keyword>
<keyword id="KW-0963">Cytoplasm</keyword>
<keyword id="KW-0547">Nucleotide-binding</keyword>
<keyword id="KW-0548">Nucleotidyltransferase</keyword>
<keyword id="KW-1185">Reference proteome</keyword>
<keyword id="KW-0808">Transferase</keyword>
<keyword id="KW-0819">tRNA processing</keyword>
<sequence>MNNNLQGDAIAAAIDVLNEERVIAYPTEAVFGVGCDPDSETAVMRLLELKQRPVDKGLILIAANYEQLKPYIDDTMLTDAQRETIFSRWPGPVTFVFPAPATTPRWLTGRFDSLAVRVTDHPLVVALCQAYGKPLVSTSANLSGLPPCRTVDEVRAQFGAAFPVVPGETGGRLNPSEIRDALTGELFRQG</sequence>
<reference key="1">
    <citation type="journal article" date="2008" name="J. Bacteriol.">
        <title>The pangenome structure of Escherichia coli: comparative genomic analysis of E. coli commensal and pathogenic isolates.</title>
        <authorList>
            <person name="Rasko D.A."/>
            <person name="Rosovitz M.J."/>
            <person name="Myers G.S.A."/>
            <person name="Mongodin E.F."/>
            <person name="Fricke W.F."/>
            <person name="Gajer P."/>
            <person name="Crabtree J."/>
            <person name="Sebaihia M."/>
            <person name="Thomson N.R."/>
            <person name="Chaudhuri R."/>
            <person name="Henderson I.R."/>
            <person name="Sperandio V."/>
            <person name="Ravel J."/>
        </authorList>
    </citation>
    <scope>NUCLEOTIDE SEQUENCE [LARGE SCALE GENOMIC DNA]</scope>
    <source>
        <strain>E24377A / ETEC</strain>
    </source>
</reference>
<protein>
    <recommendedName>
        <fullName evidence="1">Threonylcarbamoyl-AMP synthase</fullName>
        <shortName evidence="1">TC-AMP synthase</shortName>
        <ecNumber evidence="1">2.7.7.87</ecNumber>
    </recommendedName>
    <alternativeName>
        <fullName evidence="1">L-threonylcarbamoyladenylate synthase</fullName>
    </alternativeName>
    <alternativeName>
        <fullName evidence="1">t(6)A37 threonylcarbamoyladenosine biosynthesis protein TsaC</fullName>
    </alternativeName>
    <alternativeName>
        <fullName evidence="1">tRNA threonylcarbamoyladenosine biosynthesis protein TsaC</fullName>
    </alternativeName>
</protein>
<dbReference type="EC" id="2.7.7.87" evidence="1"/>
<dbReference type="EMBL" id="CP000800">
    <property type="protein sequence ID" value="ABV16584.1"/>
    <property type="status" value="ALT_INIT"/>
    <property type="molecule type" value="Genomic_DNA"/>
</dbReference>
<dbReference type="RefSeq" id="WP_001297709.1">
    <property type="nucleotide sequence ID" value="NC_009801.1"/>
</dbReference>
<dbReference type="SMR" id="A7ZSH1"/>
<dbReference type="GeneID" id="75204135"/>
<dbReference type="KEGG" id="ecw:EcE24377A_3765"/>
<dbReference type="HOGENOM" id="CLU_031397_6_0_6"/>
<dbReference type="Proteomes" id="UP000001122">
    <property type="component" value="Chromosome"/>
</dbReference>
<dbReference type="GO" id="GO:0005737">
    <property type="term" value="C:cytoplasm"/>
    <property type="evidence" value="ECO:0007669"/>
    <property type="project" value="UniProtKB-SubCell"/>
</dbReference>
<dbReference type="GO" id="GO:0005524">
    <property type="term" value="F:ATP binding"/>
    <property type="evidence" value="ECO:0007669"/>
    <property type="project" value="UniProtKB-UniRule"/>
</dbReference>
<dbReference type="GO" id="GO:0003725">
    <property type="term" value="F:double-stranded RNA binding"/>
    <property type="evidence" value="ECO:0007669"/>
    <property type="project" value="InterPro"/>
</dbReference>
<dbReference type="GO" id="GO:0061710">
    <property type="term" value="F:L-threonylcarbamoyladenylate synthase"/>
    <property type="evidence" value="ECO:0007669"/>
    <property type="project" value="UniProtKB-EC"/>
</dbReference>
<dbReference type="GO" id="GO:0000049">
    <property type="term" value="F:tRNA binding"/>
    <property type="evidence" value="ECO:0007669"/>
    <property type="project" value="TreeGrafter"/>
</dbReference>
<dbReference type="GO" id="GO:0006450">
    <property type="term" value="P:regulation of translational fidelity"/>
    <property type="evidence" value="ECO:0007669"/>
    <property type="project" value="TreeGrafter"/>
</dbReference>
<dbReference type="GO" id="GO:0002949">
    <property type="term" value="P:tRNA threonylcarbamoyladenosine modification"/>
    <property type="evidence" value="ECO:0007669"/>
    <property type="project" value="UniProtKB-UniRule"/>
</dbReference>
<dbReference type="FunFam" id="3.90.870.10:FF:000004">
    <property type="entry name" value="Threonylcarbamoyl-AMP synthase"/>
    <property type="match status" value="1"/>
</dbReference>
<dbReference type="Gene3D" id="3.90.870.10">
    <property type="entry name" value="DHBP synthase"/>
    <property type="match status" value="1"/>
</dbReference>
<dbReference type="HAMAP" id="MF_01852">
    <property type="entry name" value="TsaC"/>
    <property type="match status" value="1"/>
</dbReference>
<dbReference type="InterPro" id="IPR017945">
    <property type="entry name" value="DHBP_synth_RibB-like_a/b_dom"/>
</dbReference>
<dbReference type="InterPro" id="IPR006070">
    <property type="entry name" value="Sua5-like_dom"/>
</dbReference>
<dbReference type="InterPro" id="IPR023535">
    <property type="entry name" value="TC-AMP_synthase"/>
</dbReference>
<dbReference type="InterPro" id="IPR050156">
    <property type="entry name" value="TC-AMP_synthase_SUA5"/>
</dbReference>
<dbReference type="NCBIfam" id="NF007919">
    <property type="entry name" value="PRK10634.1"/>
    <property type="match status" value="1"/>
</dbReference>
<dbReference type="PANTHER" id="PTHR17490">
    <property type="entry name" value="SUA5"/>
    <property type="match status" value="1"/>
</dbReference>
<dbReference type="PANTHER" id="PTHR17490:SF18">
    <property type="entry name" value="THREONYLCARBAMOYL-AMP SYNTHASE"/>
    <property type="match status" value="1"/>
</dbReference>
<dbReference type="Pfam" id="PF01300">
    <property type="entry name" value="Sua5_yciO_yrdC"/>
    <property type="match status" value="1"/>
</dbReference>
<dbReference type="SUPFAM" id="SSF55821">
    <property type="entry name" value="YrdC/RibB"/>
    <property type="match status" value="1"/>
</dbReference>
<dbReference type="PROSITE" id="PS51163">
    <property type="entry name" value="YRDC"/>
    <property type="match status" value="1"/>
</dbReference>
<comment type="function">
    <text evidence="1">Required for the formation of a threonylcarbamoyl group on adenosine at position 37 (t(6)A37) in tRNAs that read codons beginning with adenine. Catalyzes the conversion of L-threonine, HCO(3)(-)/CO(2) and ATP to give threonylcarbamoyl-AMP (TC-AMP) as the acyladenylate intermediate, with the release of diphosphate.</text>
</comment>
<comment type="catalytic activity">
    <reaction evidence="1">
        <text>L-threonine + hydrogencarbonate + ATP = L-threonylcarbamoyladenylate + diphosphate + H2O</text>
        <dbReference type="Rhea" id="RHEA:36407"/>
        <dbReference type="ChEBI" id="CHEBI:15377"/>
        <dbReference type="ChEBI" id="CHEBI:17544"/>
        <dbReference type="ChEBI" id="CHEBI:30616"/>
        <dbReference type="ChEBI" id="CHEBI:33019"/>
        <dbReference type="ChEBI" id="CHEBI:57926"/>
        <dbReference type="ChEBI" id="CHEBI:73682"/>
        <dbReference type="EC" id="2.7.7.87"/>
    </reaction>
</comment>
<comment type="subcellular location">
    <subcellularLocation>
        <location evidence="1">Cytoplasm</location>
    </subcellularLocation>
</comment>
<comment type="similarity">
    <text evidence="1">Belongs to the SUA5 family. TsaC subfamily.</text>
</comment>
<comment type="sequence caution" evidence="2">
    <conflict type="erroneous initiation">
        <sequence resource="EMBL-CDS" id="ABV16584"/>
    </conflict>
</comment>
<name>TSAC_ECO24</name>